<feature type="chain" id="PRO_0000451210" description="Calcium-transporting ATPase 2">
    <location>
        <begin position="1"/>
        <end position="1414"/>
    </location>
</feature>
<feature type="topological domain" description="Cytoplasmic" evidence="9">
    <location>
        <begin position="1"/>
        <end position="327"/>
    </location>
</feature>
<feature type="transmembrane region" description="Helical" evidence="3">
    <location>
        <begin position="328"/>
        <end position="348"/>
    </location>
</feature>
<feature type="topological domain" description="Vacuolar" evidence="9">
    <location>
        <begin position="349"/>
        <end position="370"/>
    </location>
</feature>
<feature type="transmembrane region" description="Helical" evidence="3">
    <location>
        <begin position="371"/>
        <end position="391"/>
    </location>
</feature>
<feature type="topological domain" description="Cytoplasmic" evidence="9">
    <location>
        <begin position="392"/>
        <end position="541"/>
    </location>
</feature>
<feature type="transmembrane region" description="Helical" evidence="3">
    <location>
        <begin position="542"/>
        <end position="562"/>
    </location>
</feature>
<feature type="topological domain" description="Vacuolar" evidence="9">
    <location>
        <begin position="563"/>
        <end position="585"/>
    </location>
</feature>
<feature type="transmembrane region" description="Helical" evidence="3">
    <location>
        <begin position="586"/>
        <end position="606"/>
    </location>
</feature>
<feature type="topological domain" description="Cytoplasmic" evidence="9">
    <location>
        <begin position="607"/>
        <end position="1040"/>
    </location>
</feature>
<feature type="transmembrane region" description="Helical" evidence="3">
    <location>
        <begin position="1041"/>
        <end position="1061"/>
    </location>
</feature>
<feature type="topological domain" description="Vacuolar" evidence="9">
    <location>
        <begin position="1062"/>
        <end position="1068"/>
    </location>
</feature>
<feature type="transmembrane region" description="Helical" evidence="3">
    <location>
        <begin position="1069"/>
        <end position="1089"/>
    </location>
</feature>
<feature type="topological domain" description="Cytoplasmic" evidence="9">
    <location>
        <begin position="1090"/>
        <end position="1118"/>
    </location>
</feature>
<feature type="transmembrane region" description="Helical" evidence="3">
    <location>
        <begin position="1119"/>
        <end position="1139"/>
    </location>
</feature>
<feature type="topological domain" description="Vacuolar" evidence="9">
    <location>
        <begin position="1140"/>
        <end position="1153"/>
    </location>
</feature>
<feature type="transmembrane region" description="Helical" evidence="3">
    <location>
        <begin position="1154"/>
        <end position="1171"/>
    </location>
</feature>
<feature type="topological domain" description="Cytoplasmic" evidence="9">
    <location>
        <begin position="1172"/>
        <end position="1191"/>
    </location>
</feature>
<feature type="transmembrane region" description="Helical" evidence="3">
    <location>
        <begin position="1192"/>
        <end position="1212"/>
    </location>
</feature>
<feature type="topological domain" description="Vacuolar" evidence="9">
    <location>
        <begin position="1213"/>
        <end position="1223"/>
    </location>
</feature>
<feature type="transmembrane region" description="Helical" evidence="3">
    <location>
        <begin position="1224"/>
        <end position="1244"/>
    </location>
</feature>
<feature type="topological domain" description="Cytoplasmic" evidence="9">
    <location>
        <begin position="1245"/>
        <end position="1414"/>
    </location>
</feature>
<feature type="region of interest" description="Disordered" evidence="5">
    <location>
        <begin position="1"/>
        <end position="231"/>
    </location>
</feature>
<feature type="region of interest" description="Disordered" evidence="5">
    <location>
        <begin position="265"/>
        <end position="294"/>
    </location>
</feature>
<feature type="region of interest" description="Disordered" evidence="5">
    <location>
        <begin position="1376"/>
        <end position="1414"/>
    </location>
</feature>
<feature type="compositionally biased region" description="Low complexity" evidence="5">
    <location>
        <begin position="33"/>
        <end position="53"/>
    </location>
</feature>
<feature type="compositionally biased region" description="Low complexity" evidence="5">
    <location>
        <begin position="75"/>
        <end position="96"/>
    </location>
</feature>
<feature type="compositionally biased region" description="Basic and acidic residues" evidence="5">
    <location>
        <begin position="179"/>
        <end position="189"/>
    </location>
</feature>
<feature type="compositionally biased region" description="Basic residues" evidence="5">
    <location>
        <begin position="190"/>
        <end position="201"/>
    </location>
</feature>
<feature type="compositionally biased region" description="Basic and acidic residues" evidence="5">
    <location>
        <begin position="202"/>
        <end position="229"/>
    </location>
</feature>
<feature type="active site" description="4-aspartylphosphate intermediate" evidence="1">
    <location>
        <position position="642"/>
    </location>
</feature>
<feature type="binding site" evidence="1">
    <location>
        <position position="595"/>
    </location>
    <ligand>
        <name>Ca(2+)</name>
        <dbReference type="ChEBI" id="CHEBI:29108"/>
        <label>1</label>
    </ligand>
</feature>
<feature type="binding site" evidence="1">
    <location>
        <position position="600"/>
    </location>
    <ligand>
        <name>Ca(2+)</name>
        <dbReference type="ChEBI" id="CHEBI:29108"/>
        <label>1</label>
    </ligand>
</feature>
<feature type="binding site" evidence="1">
    <location>
        <position position="642"/>
    </location>
    <ligand>
        <name>Mg(2+)</name>
        <dbReference type="ChEBI" id="CHEBI:18420"/>
    </ligand>
</feature>
<feature type="binding site" evidence="1">
    <location>
        <position position="644"/>
    </location>
    <ligand>
        <name>ATP</name>
        <dbReference type="ChEBI" id="CHEBI:30616"/>
    </ligand>
</feature>
<feature type="binding site" evidence="1">
    <location>
        <position position="644"/>
    </location>
    <ligand>
        <name>Mg(2+)</name>
        <dbReference type="ChEBI" id="CHEBI:18420"/>
    </ligand>
</feature>
<feature type="binding site" evidence="1">
    <location>
        <position position="737"/>
    </location>
    <ligand>
        <name>ATP</name>
        <dbReference type="ChEBI" id="CHEBI:30616"/>
    </ligand>
</feature>
<feature type="binding site" evidence="1">
    <location>
        <position position="779"/>
    </location>
    <ligand>
        <name>ATP</name>
        <dbReference type="ChEBI" id="CHEBI:30616"/>
    </ligand>
</feature>
<feature type="binding site" evidence="1">
    <location>
        <begin position="909"/>
        <end position="911"/>
    </location>
    <ligand>
        <name>ATP</name>
        <dbReference type="ChEBI" id="CHEBI:30616"/>
    </ligand>
</feature>
<feature type="binding site" evidence="1">
    <location>
        <position position="958"/>
    </location>
    <ligand>
        <name>ATP</name>
        <dbReference type="ChEBI" id="CHEBI:30616"/>
    </ligand>
</feature>
<feature type="binding site" evidence="1">
    <location>
        <position position="964"/>
    </location>
    <ligand>
        <name>ATP</name>
        <dbReference type="ChEBI" id="CHEBI:30616"/>
    </ligand>
</feature>
<feature type="binding site" evidence="1">
    <location>
        <position position="983"/>
    </location>
    <ligand>
        <name>Mg(2+)</name>
        <dbReference type="ChEBI" id="CHEBI:18420"/>
    </ligand>
</feature>
<feature type="binding site" evidence="1">
    <location>
        <position position="986"/>
    </location>
    <ligand>
        <name>ATP</name>
        <dbReference type="ChEBI" id="CHEBI:30616"/>
    </ligand>
</feature>
<feature type="binding site" evidence="1">
    <location>
        <position position="1049"/>
    </location>
    <ligand>
        <name>Ca(2+)</name>
        <dbReference type="ChEBI" id="CHEBI:29108"/>
        <label>2</label>
    </ligand>
</feature>
<feature type="binding site" evidence="1">
    <location>
        <position position="1079"/>
    </location>
    <ligand>
        <name>Ca(2+)</name>
        <dbReference type="ChEBI" id="CHEBI:29108"/>
        <label>1</label>
    </ligand>
</feature>
<feature type="binding site" evidence="1">
    <location>
        <position position="1083"/>
    </location>
    <ligand>
        <name>Ca(2+)</name>
        <dbReference type="ChEBI" id="CHEBI:29108"/>
        <label>1</label>
    </ligand>
</feature>
<feature type="binding site" evidence="1">
    <location>
        <position position="1083"/>
    </location>
    <ligand>
        <name>Ca(2+)</name>
        <dbReference type="ChEBI" id="CHEBI:29108"/>
        <label>2</label>
    </ligand>
</feature>
<feature type="binding site" evidence="1">
    <location>
        <position position="1208"/>
    </location>
    <ligand>
        <name>Ca(2+)</name>
        <dbReference type="ChEBI" id="CHEBI:29108"/>
        <label>2</label>
    </ligand>
</feature>
<keyword id="KW-0067">ATP-binding</keyword>
<keyword id="KW-0106">Calcium</keyword>
<keyword id="KW-0109">Calcium transport</keyword>
<keyword id="KW-0406">Ion transport</keyword>
<keyword id="KW-0460">Magnesium</keyword>
<keyword id="KW-0472">Membrane</keyword>
<keyword id="KW-0479">Metal-binding</keyword>
<keyword id="KW-0547">Nucleotide-binding</keyword>
<keyword id="KW-1278">Translocase</keyword>
<keyword id="KW-0812">Transmembrane</keyword>
<keyword id="KW-1133">Transmembrane helix</keyword>
<keyword id="KW-0813">Transport</keyword>
<keyword id="KW-0926">Vacuole</keyword>
<gene>
    <name evidence="8" type="primary">PMC1</name>
    <name evidence="10" type="ORF">CNAG_01232</name>
</gene>
<dbReference type="EC" id="7.2.2.10" evidence="4"/>
<dbReference type="EMBL" id="CP003824">
    <property type="protein sequence ID" value="AFR94914.1"/>
    <property type="molecule type" value="Genomic_DNA"/>
</dbReference>
<dbReference type="RefSeq" id="XP_012049404.1">
    <property type="nucleotide sequence ID" value="XM_012194014.1"/>
</dbReference>
<dbReference type="SMR" id="J9VQQ3"/>
<dbReference type="GeneID" id="23884966"/>
<dbReference type="KEGG" id="cng:CNAG_01232"/>
<dbReference type="VEuPathDB" id="FungiDB:CNAG_01232"/>
<dbReference type="HOGENOM" id="CLU_002360_9_3_1"/>
<dbReference type="OrthoDB" id="6290at5206"/>
<dbReference type="PHI-base" id="PHI:3801"/>
<dbReference type="Proteomes" id="UP000010091">
    <property type="component" value="Chromosome 5"/>
</dbReference>
<dbReference type="GO" id="GO:0005886">
    <property type="term" value="C:plasma membrane"/>
    <property type="evidence" value="ECO:0007669"/>
    <property type="project" value="TreeGrafter"/>
</dbReference>
<dbReference type="GO" id="GO:0005774">
    <property type="term" value="C:vacuolar membrane"/>
    <property type="evidence" value="ECO:0007669"/>
    <property type="project" value="UniProtKB-SubCell"/>
</dbReference>
<dbReference type="GO" id="GO:0005524">
    <property type="term" value="F:ATP binding"/>
    <property type="evidence" value="ECO:0007669"/>
    <property type="project" value="UniProtKB-KW"/>
</dbReference>
<dbReference type="GO" id="GO:0016887">
    <property type="term" value="F:ATP hydrolysis activity"/>
    <property type="evidence" value="ECO:0007669"/>
    <property type="project" value="InterPro"/>
</dbReference>
<dbReference type="GO" id="GO:0046872">
    <property type="term" value="F:metal ion binding"/>
    <property type="evidence" value="ECO:0007669"/>
    <property type="project" value="UniProtKB-KW"/>
</dbReference>
<dbReference type="GO" id="GO:0005388">
    <property type="term" value="F:P-type calcium transporter activity"/>
    <property type="evidence" value="ECO:0000316"/>
    <property type="project" value="UniProtKB"/>
</dbReference>
<dbReference type="GO" id="GO:0140146">
    <property type="term" value="P:calcium ion import into vacuole"/>
    <property type="evidence" value="ECO:0000316"/>
    <property type="project" value="UniProtKB"/>
</dbReference>
<dbReference type="GO" id="GO:0006874">
    <property type="term" value="P:intracellular calcium ion homeostasis"/>
    <property type="evidence" value="ECO:0007669"/>
    <property type="project" value="TreeGrafter"/>
</dbReference>
<dbReference type="CDD" id="cd02081">
    <property type="entry name" value="P-type_ATPase_Ca_PMCA-like"/>
    <property type="match status" value="1"/>
</dbReference>
<dbReference type="FunFam" id="1.20.1110.10:FF:000002">
    <property type="entry name" value="Calcium-transporting ATPase"/>
    <property type="match status" value="1"/>
</dbReference>
<dbReference type="FunFam" id="1.20.1110.10:FF:000039">
    <property type="entry name" value="Calcium-transporting ATPase"/>
    <property type="match status" value="1"/>
</dbReference>
<dbReference type="FunFam" id="2.70.150.10:FF:000028">
    <property type="entry name" value="Calcium-transporting ATPase"/>
    <property type="match status" value="1"/>
</dbReference>
<dbReference type="FunFam" id="3.40.1110.10:FF:000031">
    <property type="entry name" value="Calcium-transporting ATPase"/>
    <property type="match status" value="1"/>
</dbReference>
<dbReference type="FunFam" id="3.40.50.1000:FF:000018">
    <property type="entry name" value="Calcium-transporting ATPase"/>
    <property type="match status" value="1"/>
</dbReference>
<dbReference type="Gene3D" id="3.40.1110.10">
    <property type="entry name" value="Calcium-transporting ATPase, cytoplasmic domain N"/>
    <property type="match status" value="1"/>
</dbReference>
<dbReference type="Gene3D" id="2.70.150.10">
    <property type="entry name" value="Calcium-transporting ATPase, cytoplasmic transduction domain A"/>
    <property type="match status" value="1"/>
</dbReference>
<dbReference type="Gene3D" id="1.20.1110.10">
    <property type="entry name" value="Calcium-transporting ATPase, transmembrane domain"/>
    <property type="match status" value="1"/>
</dbReference>
<dbReference type="Gene3D" id="3.40.50.1000">
    <property type="entry name" value="HAD superfamily/HAD-like"/>
    <property type="match status" value="1"/>
</dbReference>
<dbReference type="InterPro" id="IPR006068">
    <property type="entry name" value="ATPase_P-typ_cation-transptr_C"/>
</dbReference>
<dbReference type="InterPro" id="IPR004014">
    <property type="entry name" value="ATPase_P-typ_cation-transptr_N"/>
</dbReference>
<dbReference type="InterPro" id="IPR023299">
    <property type="entry name" value="ATPase_P-typ_cyto_dom_N"/>
</dbReference>
<dbReference type="InterPro" id="IPR018303">
    <property type="entry name" value="ATPase_P-typ_P_site"/>
</dbReference>
<dbReference type="InterPro" id="IPR023298">
    <property type="entry name" value="ATPase_P-typ_TM_dom_sf"/>
</dbReference>
<dbReference type="InterPro" id="IPR008250">
    <property type="entry name" value="ATPase_P-typ_transduc_dom_A_sf"/>
</dbReference>
<dbReference type="InterPro" id="IPR036412">
    <property type="entry name" value="HAD-like_sf"/>
</dbReference>
<dbReference type="InterPro" id="IPR023214">
    <property type="entry name" value="HAD_sf"/>
</dbReference>
<dbReference type="InterPro" id="IPR006408">
    <property type="entry name" value="P-type_ATPase_IIB"/>
</dbReference>
<dbReference type="InterPro" id="IPR001757">
    <property type="entry name" value="P_typ_ATPase"/>
</dbReference>
<dbReference type="InterPro" id="IPR044492">
    <property type="entry name" value="P_typ_ATPase_HD_dom"/>
</dbReference>
<dbReference type="NCBIfam" id="TIGR01517">
    <property type="entry name" value="ATPase-IIB_Ca"/>
    <property type="match status" value="1"/>
</dbReference>
<dbReference type="NCBIfam" id="TIGR01494">
    <property type="entry name" value="ATPase_P-type"/>
    <property type="match status" value="1"/>
</dbReference>
<dbReference type="PANTHER" id="PTHR24093:SF369">
    <property type="entry name" value="CALCIUM-TRANSPORTING ATPASE"/>
    <property type="match status" value="1"/>
</dbReference>
<dbReference type="PANTHER" id="PTHR24093">
    <property type="entry name" value="CATION TRANSPORTING ATPASE"/>
    <property type="match status" value="1"/>
</dbReference>
<dbReference type="Pfam" id="PF13246">
    <property type="entry name" value="Cation_ATPase"/>
    <property type="match status" value="1"/>
</dbReference>
<dbReference type="Pfam" id="PF00689">
    <property type="entry name" value="Cation_ATPase_C"/>
    <property type="match status" value="1"/>
</dbReference>
<dbReference type="Pfam" id="PF00690">
    <property type="entry name" value="Cation_ATPase_N"/>
    <property type="match status" value="1"/>
</dbReference>
<dbReference type="Pfam" id="PF00122">
    <property type="entry name" value="E1-E2_ATPase"/>
    <property type="match status" value="1"/>
</dbReference>
<dbReference type="Pfam" id="PF00702">
    <property type="entry name" value="Hydrolase"/>
    <property type="match status" value="1"/>
</dbReference>
<dbReference type="PRINTS" id="PR00119">
    <property type="entry name" value="CATATPASE"/>
</dbReference>
<dbReference type="PRINTS" id="PR00120">
    <property type="entry name" value="HATPASE"/>
</dbReference>
<dbReference type="SFLD" id="SFLDS00003">
    <property type="entry name" value="Haloacid_Dehalogenase"/>
    <property type="match status" value="1"/>
</dbReference>
<dbReference type="SFLD" id="SFLDF00027">
    <property type="entry name" value="p-type_atpase"/>
    <property type="match status" value="1"/>
</dbReference>
<dbReference type="SMART" id="SM00831">
    <property type="entry name" value="Cation_ATPase_N"/>
    <property type="match status" value="1"/>
</dbReference>
<dbReference type="SUPFAM" id="SSF81653">
    <property type="entry name" value="Calcium ATPase, transduction domain A"/>
    <property type="match status" value="1"/>
</dbReference>
<dbReference type="SUPFAM" id="SSF81665">
    <property type="entry name" value="Calcium ATPase, transmembrane domain M"/>
    <property type="match status" value="1"/>
</dbReference>
<dbReference type="SUPFAM" id="SSF56784">
    <property type="entry name" value="HAD-like"/>
    <property type="match status" value="1"/>
</dbReference>
<dbReference type="SUPFAM" id="SSF81660">
    <property type="entry name" value="Metal cation-transporting ATPase, ATP-binding domain N"/>
    <property type="match status" value="1"/>
</dbReference>
<dbReference type="PROSITE" id="PS00154">
    <property type="entry name" value="ATPASE_E1_E2"/>
    <property type="match status" value="1"/>
</dbReference>
<comment type="function">
    <text evidence="2 6">This magnesium-dependent enzyme catalyzes the hydrolysis of ATP coupled with the transport of calcium (By similarity). Transports calcium to the vacuole and participates in the control of cytosolic free calcium (PubMed:23895559).</text>
</comment>
<comment type="catalytic activity">
    <reaction evidence="4">
        <text>Ca(2+)(in) + ATP + H2O = Ca(2+)(out) + ADP + phosphate + H(+)</text>
        <dbReference type="Rhea" id="RHEA:18105"/>
        <dbReference type="ChEBI" id="CHEBI:15377"/>
        <dbReference type="ChEBI" id="CHEBI:15378"/>
        <dbReference type="ChEBI" id="CHEBI:29108"/>
        <dbReference type="ChEBI" id="CHEBI:30616"/>
        <dbReference type="ChEBI" id="CHEBI:43474"/>
        <dbReference type="ChEBI" id="CHEBI:456216"/>
        <dbReference type="EC" id="7.2.2.10"/>
    </reaction>
</comment>
<comment type="subcellular location">
    <subcellularLocation>
        <location evidence="2">Vacuole membrane</location>
        <topology evidence="4">Multi-pass membrane protein</topology>
    </subcellularLocation>
</comment>
<comment type="disruption phenotype">
    <text evidence="6 7">Increases cytosolic free calcium level (PubMed:23895559). Resistance to cadmium (PubMed:23895559). Decreases cell population growth in serum (PubMed:29113016). Sensitive to calcium (PubMed:23895559). Abnormal level of calcineurin-mediated signaling pathway gene RNA, transepithelial migration gene RNA, and antioxidant gene RNA (PubMed:29113016). Decreases VCX1 RNA level and increases ECA1 RNA level during cellular response to calcium (PubMed:23895559). Decreases urease activity (PubMed:29113016). Avirulence in a mouse systemic model of infection; decreases lung fungal burden and abolishes brain fungal burden (PubMed:29113016). Decreases virulence in a mouse intranasal inhalation infection model; decreases lung fungal burden and abolishes brain fungal burden (PubMed:23895559). Severely decreases transepithelial migration through the host blood-brain barrier (PubMed:29113016). Increases susceptibility to phagocytosis by macrophages (PubMed:29113016). Phenotypes enhanced in a double knockout with VCX1 (PubMed:23895559).</text>
</comment>
<comment type="similarity">
    <text evidence="4">Belongs to the cation transport ATPase (P-type) (TC 3.A.3) family.</text>
</comment>
<evidence type="ECO:0000250" key="1">
    <source>
        <dbReference type="UniProtKB" id="P04191"/>
    </source>
</evidence>
<evidence type="ECO:0000250" key="2">
    <source>
        <dbReference type="UniProtKB" id="P38929"/>
    </source>
</evidence>
<evidence type="ECO:0000255" key="3"/>
<evidence type="ECO:0000255" key="4">
    <source>
        <dbReference type="RuleBase" id="RU361146"/>
    </source>
</evidence>
<evidence type="ECO:0000256" key="5">
    <source>
        <dbReference type="SAM" id="MobiDB-lite"/>
    </source>
</evidence>
<evidence type="ECO:0000269" key="6">
    <source>
    </source>
</evidence>
<evidence type="ECO:0000269" key="7">
    <source>
    </source>
</evidence>
<evidence type="ECO:0000303" key="8">
    <source>
    </source>
</evidence>
<evidence type="ECO:0000305" key="9"/>
<evidence type="ECO:0000312" key="10">
    <source>
        <dbReference type="EMBL" id="AFR94914.1"/>
    </source>
</evidence>
<evidence type="ECO:0000312" key="11">
    <source>
        <dbReference type="Proteomes" id="UP000010091"/>
    </source>
</evidence>
<protein>
    <recommendedName>
        <fullName evidence="8">Calcium-transporting ATPase 2</fullName>
        <ecNumber evidence="4">7.2.2.10</ecNumber>
    </recommendedName>
</protein>
<accession>J9VQQ3</accession>
<proteinExistence type="inferred from homology"/>
<sequence>MSRNNPPPVIITTDPDSPALHSAPSTPPPNQRPTPTLVIPGSPASESSHPESPQGNDPFRLSPNARLYPPGSGHSPTPSYSSALTPPSPTLTSSSSVHFSDELPTPSSPNPKTSLALRDNHPDARSGMETLQTVDENDPQRRHARGWSIGTWSSAAPTADGYSMKKPLIRTATGASEVDGDRGEDDANKKGKKDKKGKKGKKDKEEPPSAHLDPDKDKTDPTPFREKPSRLAMLVDPKSLEDLEKIGGVSGLLEGLGVDGEKGLAVGTDEGNAENGAPRSSADMPGGNGPQWRASMDRRRDIYGRNDLPRRKSKSLLLLMWLAFKDKVLILLSVAAVVSLALGLYQDLGTPPKIIYNDECPDGCEEAQVDWVEGVAIVVAIIIVVLVGSINDWQKERQFKKLNEKREDRNVKVIRGGSEMVINVKDVVVGDVCLLEPGEIIPVDGIFLRGHNVRCDESGATGESDAIKKFSYDECIKERDNLQPGQRQKKDCFLISGAKVLEGVGEYVVIAVGPTSFNGRIMMAMRGDADETPLQIKLNHLAELIAKLGGASGLLLFIALMIRFFVQLKTNPDRSANDKAQSFIQILIIAVTLVVVAVPEGLPLAVTLALAFATKRMTKQNLLVRVLGSCETMANATVVCTDKTGTLTQNEMTVVAGSLGVHGKFVKDLSDNASRSNANEGEGHSVHGDFSFDMSQLNDYASSSLQTLFNEAICINSTAFEDKNEEGKLNFVGSKTETALLRFAKDMEWPNYRQVRESAEIVQMIPFSSELKAMGVVVRKDDTYRLYLKGASEVLSNNCTRHVVVHQDGNKGDDIETTEFDDDTMSNISKTIIFYANQSLRTIALCYRDFESWPPAGTEKDGADEVPYEAIAKDMTLIAITGIEDPLRPGVREAVEKCQLAGVAVKMCTGDNVLTARSIASQCGIFTAGGVVMEGPLFRKLSDSDRLEIAPRLQILARSSPEDKRLLVKTLKSMGEVVGVTGDGTNDGPALKLANVGFAMGIAGTEVAKEASDIILMDDSFKNIVLAIMWGRCVNDSVKKFLQFQISVNITAVFITFISAVASSSEESVLTAVQLLWVNLIMDTFAALALATDPATESSLDRKPDRKNAPLITVEMFKMIMVQAIYQIIVCLVLHFAGLKILGLEDNDQNNTELGALVFNCFVFCQIFNQLNCRRLDRKLNVLEGFWRNWYFIIIFLIMVGGQILIVEVGGAAFQVTRLGGRDWGITLVIGALSLPIGALVRLTPTGPFARLLVKLHIYADPNKLPELSPEAEEEQYSYNPALSRVKDNLSTYARIRGGRLRASSMVAKSRNAQLRDADIQFPSLLTMVPTVIAGTVGAGAHWVTPHNSIGLSNPAGQDPSYSTAELFKGKVQLHPRTNPDDPLYAKFGLQPPESRGSSVSGAEGLSSGDANNV</sequence>
<name>ATC2_CRYNH</name>
<organism evidence="11">
    <name type="scientific">Cryptococcus neoformans var. grubii serotype A (strain H99 / ATCC 208821 / CBS 10515 / FGSC 9487)</name>
    <name type="common">Filobasidiella neoformans var. grubii</name>
    <dbReference type="NCBI Taxonomy" id="235443"/>
    <lineage>
        <taxon>Eukaryota</taxon>
        <taxon>Fungi</taxon>
        <taxon>Dikarya</taxon>
        <taxon>Basidiomycota</taxon>
        <taxon>Agaricomycotina</taxon>
        <taxon>Tremellomycetes</taxon>
        <taxon>Tremellales</taxon>
        <taxon>Cryptococcaceae</taxon>
        <taxon>Cryptococcus</taxon>
        <taxon>Cryptococcus neoformans species complex</taxon>
    </lineage>
</organism>
<reference evidence="11" key="1">
    <citation type="journal article" date="2014" name="PLoS Genet.">
        <title>Analysis of the genome and transcriptome of Cryptococcus neoformans var. grubii reveals complex RNA expression and microevolution leading to virulence attenuation.</title>
        <authorList>
            <person name="Janbon G."/>
            <person name="Ormerod K.L."/>
            <person name="Paulet D."/>
            <person name="Byrnes E.J. III"/>
            <person name="Yadav V."/>
            <person name="Chatterjee G."/>
            <person name="Mullapudi N."/>
            <person name="Hon C.-C."/>
            <person name="Billmyre R.B."/>
            <person name="Brunel F."/>
            <person name="Bahn Y.-S."/>
            <person name="Chen W."/>
            <person name="Chen Y."/>
            <person name="Chow E.W.L."/>
            <person name="Coppee J.-Y."/>
            <person name="Floyd-Averette A."/>
            <person name="Gaillardin C."/>
            <person name="Gerik K.J."/>
            <person name="Goldberg J."/>
            <person name="Gonzalez-Hilarion S."/>
            <person name="Gujja S."/>
            <person name="Hamlin J.L."/>
            <person name="Hsueh Y.-P."/>
            <person name="Ianiri G."/>
            <person name="Jones S."/>
            <person name="Kodira C.D."/>
            <person name="Kozubowski L."/>
            <person name="Lam W."/>
            <person name="Marra M."/>
            <person name="Mesner L.D."/>
            <person name="Mieczkowski P.A."/>
            <person name="Moyrand F."/>
            <person name="Nielsen K."/>
            <person name="Proux C."/>
            <person name="Rossignol T."/>
            <person name="Schein J.E."/>
            <person name="Sun S."/>
            <person name="Wollschlaeger C."/>
            <person name="Wood I.A."/>
            <person name="Zeng Q."/>
            <person name="Neuveglise C."/>
            <person name="Newlon C.S."/>
            <person name="Perfect J.R."/>
            <person name="Lodge J.K."/>
            <person name="Idnurm A."/>
            <person name="Stajich J.E."/>
            <person name="Kronstad J.W."/>
            <person name="Sanyal K."/>
            <person name="Heitman J."/>
            <person name="Fraser J.A."/>
            <person name="Cuomo C.A."/>
            <person name="Dietrich F.S."/>
        </authorList>
    </citation>
    <scope>NUCLEOTIDE SEQUENCE [LARGE SCALE GENOMIC DNA]</scope>
    <source>
        <strain>H99 / ATCC 208821 / CBS 10515 / FGSC 9487</strain>
    </source>
</reference>
<reference evidence="9" key="2">
    <citation type="journal article" date="2013" name="FEBS J.">
        <title>The calcium transporter Pmc1 provides Ca2+ tolerance and influences the progression of murine cryptococcal infection.</title>
        <authorList>
            <person name="Kmetzsch L."/>
            <person name="Staats C.C."/>
            <person name="Cupertino J.B."/>
            <person name="Fonseca F.L."/>
            <person name="Rodrigues M.L."/>
            <person name="Schrank A."/>
            <person name="Vainstein M.H."/>
        </authorList>
    </citation>
    <scope>FUNCTION</scope>
    <scope>DISRUPTION PHENOTYPE</scope>
</reference>
<reference evidence="9" key="3">
    <citation type="journal article" date="2018" name="Cell. Microbiol.">
        <title>Cryptococcal dissemination to the central nervous system requires the vacuolar calcium transporter Pmc1.</title>
        <authorList>
            <person name="Squizani E.D."/>
            <person name="Oliveira N.K."/>
            <person name="Reuwsaat J.C.V."/>
            <person name="Marques B.M."/>
            <person name="Lopes W."/>
            <person name="Gerber A.L."/>
            <person name="de Vasconcelos A.T.R."/>
            <person name="Lev S."/>
            <person name="Djordjevic J.T."/>
            <person name="Schrank A."/>
            <person name="Vainstein M.H."/>
            <person name="Staats C.C."/>
            <person name="Kmetzsch L."/>
        </authorList>
    </citation>
    <scope>DISRUPTION PHENOTYPE</scope>
</reference>